<name>EF1B_TRYCR</name>
<accession>P34827</accession>
<proteinExistence type="evidence at transcript level"/>
<sequence>MSVKDVNKRSGELEGKLKGKLFLGGTKPSKEDVKLFNDLLGAENTSLYLWVKHMTSFTEAERKAWGAPVKVTATTSASAPAKQAPKKAASAPAKQADEDEEIDLFGEATEEETAALEAKKKKDTDAKKAKKEVIAKSSILFDVKPWDDTVDLQALANKLHAVKRDGLLWGDHKLVPVAFGVKKLQQLIVIEDDKVLSDDLEELIMSFEDEVQSMDIVAWNKI</sequence>
<keyword id="KW-0251">Elongation factor</keyword>
<keyword id="KW-0648">Protein biosynthesis</keyword>
<organism>
    <name type="scientific">Trypanosoma cruzi</name>
    <dbReference type="NCBI Taxonomy" id="5693"/>
    <lineage>
        <taxon>Eukaryota</taxon>
        <taxon>Discoba</taxon>
        <taxon>Euglenozoa</taxon>
        <taxon>Kinetoplastea</taxon>
        <taxon>Metakinetoplastina</taxon>
        <taxon>Trypanosomatida</taxon>
        <taxon>Trypanosomatidae</taxon>
        <taxon>Trypanosoma</taxon>
        <taxon>Schizotrypanum</taxon>
    </lineage>
</organism>
<comment type="function">
    <text>EF-1-beta and EF-1-delta stimulate the exchange of GDP bound to EF-1-alpha to GTP.</text>
</comment>
<comment type="subunit">
    <text>EF-1 is composed of 4 subunits: alpha, beta, delta, and gamma.</text>
</comment>
<comment type="similarity">
    <text evidence="2">Belongs to the EF-1-beta/EF-1-delta family.</text>
</comment>
<feature type="chain" id="PRO_0000155030" description="25 kDa elongation factor 1-beta">
    <location>
        <begin position="1"/>
        <end position="222"/>
    </location>
</feature>
<feature type="region of interest" description="Disordered" evidence="1">
    <location>
        <begin position="75"/>
        <end position="98"/>
    </location>
</feature>
<feature type="compositionally biased region" description="Low complexity" evidence="1">
    <location>
        <begin position="75"/>
        <end position="94"/>
    </location>
</feature>
<evidence type="ECO:0000256" key="1">
    <source>
        <dbReference type="SAM" id="MobiDB-lite"/>
    </source>
</evidence>
<evidence type="ECO:0000305" key="2"/>
<dbReference type="EMBL" id="L12584">
    <property type="protein sequence ID" value="AAA67700.1"/>
    <property type="molecule type" value="mRNA"/>
</dbReference>
<dbReference type="SMR" id="P34827"/>
<dbReference type="VEuPathDB" id="TriTrypDB:BCY84_19151"/>
<dbReference type="VEuPathDB" id="TriTrypDB:C3747_356g30"/>
<dbReference type="VEuPathDB" id="TriTrypDB:C4B63_20g319"/>
<dbReference type="VEuPathDB" id="TriTrypDB:ECC02_008794"/>
<dbReference type="VEuPathDB" id="TriTrypDB:Tc_MARK_2667"/>
<dbReference type="VEuPathDB" id="TriTrypDB:TcBrA4_0121890"/>
<dbReference type="VEuPathDB" id="TriTrypDB:TcCL_ESM03211"/>
<dbReference type="VEuPathDB" id="TriTrypDB:TcCLB.506201.39"/>
<dbReference type="VEuPathDB" id="TriTrypDB:TcCLB.507671.30"/>
<dbReference type="VEuPathDB" id="TriTrypDB:TcG_05512"/>
<dbReference type="VEuPathDB" id="TriTrypDB:TCSYLVIO_003973"/>
<dbReference type="GO" id="GO:0005829">
    <property type="term" value="C:cytosol"/>
    <property type="evidence" value="ECO:0007669"/>
    <property type="project" value="TreeGrafter"/>
</dbReference>
<dbReference type="GO" id="GO:0005853">
    <property type="term" value="C:eukaryotic translation elongation factor 1 complex"/>
    <property type="evidence" value="ECO:0007669"/>
    <property type="project" value="InterPro"/>
</dbReference>
<dbReference type="GO" id="GO:0005085">
    <property type="term" value="F:guanyl-nucleotide exchange factor activity"/>
    <property type="evidence" value="ECO:0007669"/>
    <property type="project" value="TreeGrafter"/>
</dbReference>
<dbReference type="GO" id="GO:0003746">
    <property type="term" value="F:translation elongation factor activity"/>
    <property type="evidence" value="ECO:0007669"/>
    <property type="project" value="UniProtKB-KW"/>
</dbReference>
<dbReference type="CDD" id="cd00292">
    <property type="entry name" value="EF1B"/>
    <property type="match status" value="1"/>
</dbReference>
<dbReference type="FunFam" id="3.30.70.60:FF:000001">
    <property type="entry name" value="Elongation factor 1-beta 1 like"/>
    <property type="match status" value="1"/>
</dbReference>
<dbReference type="Gene3D" id="3.30.70.60">
    <property type="match status" value="1"/>
</dbReference>
<dbReference type="InterPro" id="IPR036219">
    <property type="entry name" value="eEF-1beta-like_sf"/>
</dbReference>
<dbReference type="InterPro" id="IPR049720">
    <property type="entry name" value="EF1B_bsu/dsu"/>
</dbReference>
<dbReference type="InterPro" id="IPR014038">
    <property type="entry name" value="EF1B_bsu/dsu_GNE"/>
</dbReference>
<dbReference type="InterPro" id="IPR014717">
    <property type="entry name" value="Transl_elong_EF1B/ribsomal_bS6"/>
</dbReference>
<dbReference type="InterPro" id="IPR001326">
    <property type="entry name" value="Transl_elong_EF1B_B/D_CS"/>
</dbReference>
<dbReference type="PANTHER" id="PTHR11595">
    <property type="entry name" value="EF-HAND AND COILED-COIL DOMAIN-CONTAINING FAMILY MEMBER"/>
    <property type="match status" value="1"/>
</dbReference>
<dbReference type="PANTHER" id="PTHR11595:SF82">
    <property type="entry name" value="ELONGATION FACTOR 1-BETA, PUTATIVE-RELATED"/>
    <property type="match status" value="1"/>
</dbReference>
<dbReference type="Pfam" id="PF00736">
    <property type="entry name" value="EF1_GNE"/>
    <property type="match status" value="1"/>
</dbReference>
<dbReference type="SMART" id="SM00888">
    <property type="entry name" value="EF1_GNE"/>
    <property type="match status" value="1"/>
</dbReference>
<dbReference type="SUPFAM" id="SSF54984">
    <property type="entry name" value="eEF-1beta-like"/>
    <property type="match status" value="1"/>
</dbReference>
<dbReference type="PROSITE" id="PS00824">
    <property type="entry name" value="EF1BD_1"/>
    <property type="match status" value="1"/>
</dbReference>
<dbReference type="PROSITE" id="PS00825">
    <property type="entry name" value="EF1BD_2"/>
    <property type="match status" value="1"/>
</dbReference>
<reference key="1">
    <citation type="journal article" date="1994" name="Parasitol. Res.">
        <title>Molecular cloning of a Trypanosoma cruzi cDNA encoding a protein homologous with mammalian elongation factor 1 beta.</title>
        <authorList>
            <person name="Plumas-Marty B."/>
            <person name="Schoneck R."/>
            <person name="Billaut-Mulot O."/>
            <person name="Taibi A."/>
            <person name="Capron A."/>
            <person name="Ouaissi M.A."/>
        </authorList>
    </citation>
    <scope>NUCLEOTIDE SEQUENCE [MRNA]</scope>
    <source>
        <strain>Y</strain>
    </source>
</reference>
<protein>
    <recommendedName>
        <fullName>25 kDa elongation factor 1-beta</fullName>
        <shortName>EF-1-beta</shortName>
    </recommendedName>
</protein>